<dbReference type="EC" id="1.4.1.2"/>
<dbReference type="EMBL" id="AL123456">
    <property type="protein sequence ID" value="CCP45270.1"/>
    <property type="molecule type" value="Genomic_DNA"/>
</dbReference>
<dbReference type="PIR" id="C70867">
    <property type="entry name" value="C70867"/>
</dbReference>
<dbReference type="RefSeq" id="NP_216992.1">
    <property type="nucleotide sequence ID" value="NC_000962.3"/>
</dbReference>
<dbReference type="RefSeq" id="WP_003916039.1">
    <property type="nucleotide sequence ID" value="NZ_NVQJ01000024.1"/>
</dbReference>
<dbReference type="SMR" id="O53203"/>
<dbReference type="FunCoup" id="O53203">
    <property type="interactions" value="22"/>
</dbReference>
<dbReference type="IntAct" id="O53203">
    <property type="interactions" value="1"/>
</dbReference>
<dbReference type="STRING" id="83332.Rv2476c"/>
<dbReference type="PaxDb" id="83332-Rv2476c"/>
<dbReference type="GeneID" id="887437"/>
<dbReference type="KEGG" id="mtu:Rv2476c"/>
<dbReference type="KEGG" id="mtv:RVBD_2476c"/>
<dbReference type="TubercuList" id="Rv2476c"/>
<dbReference type="eggNOG" id="COG2902">
    <property type="taxonomic scope" value="Bacteria"/>
</dbReference>
<dbReference type="InParanoid" id="O53203"/>
<dbReference type="OrthoDB" id="9758052at2"/>
<dbReference type="PhylomeDB" id="O53203"/>
<dbReference type="Proteomes" id="UP000001584">
    <property type="component" value="Chromosome"/>
</dbReference>
<dbReference type="GO" id="GO:0005829">
    <property type="term" value="C:cytosol"/>
    <property type="evidence" value="ECO:0007005"/>
    <property type="project" value="MTBBASE"/>
</dbReference>
<dbReference type="GO" id="GO:0009274">
    <property type="term" value="C:peptidoglycan-based cell wall"/>
    <property type="evidence" value="ECO:0007005"/>
    <property type="project" value="MTBBASE"/>
</dbReference>
<dbReference type="GO" id="GO:0005886">
    <property type="term" value="C:plasma membrane"/>
    <property type="evidence" value="ECO:0007005"/>
    <property type="project" value="MTBBASE"/>
</dbReference>
<dbReference type="GO" id="GO:0004352">
    <property type="term" value="F:glutamate dehydrogenase (NAD+) activity"/>
    <property type="evidence" value="ECO:0007669"/>
    <property type="project" value="UniProtKB-EC"/>
</dbReference>
<dbReference type="GO" id="GO:0004069">
    <property type="term" value="F:L-aspartate:2-oxoglutarate aminotransferase activity"/>
    <property type="evidence" value="ECO:0007669"/>
    <property type="project" value="InterPro"/>
</dbReference>
<dbReference type="GO" id="GO:0006538">
    <property type="term" value="P:glutamate catabolic process"/>
    <property type="evidence" value="ECO:0007669"/>
    <property type="project" value="InterPro"/>
</dbReference>
<dbReference type="Gene3D" id="3.40.50.720">
    <property type="entry name" value="NAD(P)-binding Rossmann-like Domain"/>
    <property type="match status" value="1"/>
</dbReference>
<dbReference type="InterPro" id="IPR046346">
    <property type="entry name" value="Aminoacid_DH-like_N_sf"/>
</dbReference>
<dbReference type="InterPro" id="IPR048381">
    <property type="entry name" value="GDH_C"/>
</dbReference>
<dbReference type="InterPro" id="IPR036291">
    <property type="entry name" value="NAD(P)-bd_dom_sf"/>
</dbReference>
<dbReference type="InterPro" id="IPR028971">
    <property type="entry name" value="NAD-GDH_cat"/>
</dbReference>
<dbReference type="InterPro" id="IPR049062">
    <property type="entry name" value="NAD_Glu_DH_ACT2"/>
</dbReference>
<dbReference type="InterPro" id="IPR049064">
    <property type="entry name" value="NAD_Glu_DH_ACT3"/>
</dbReference>
<dbReference type="InterPro" id="IPR007780">
    <property type="entry name" value="NAD_Glu_DH_bac"/>
</dbReference>
<dbReference type="InterPro" id="IPR049059">
    <property type="entry name" value="NAD_Glu_DH_HM1"/>
</dbReference>
<dbReference type="InterPro" id="IPR049058">
    <property type="entry name" value="NAD_Glu_DH_HM2"/>
</dbReference>
<dbReference type="InterPro" id="IPR049056">
    <property type="entry name" value="NAD_Glu_DH_HM3"/>
</dbReference>
<dbReference type="InterPro" id="IPR024727">
    <property type="entry name" value="NAD_Glu_DH_N_ACT1"/>
</dbReference>
<dbReference type="PANTHER" id="PTHR43403">
    <property type="entry name" value="NAD-SPECIFIC GLUTAMATE DEHYDROGENASE"/>
    <property type="match status" value="1"/>
</dbReference>
<dbReference type="PANTHER" id="PTHR43403:SF1">
    <property type="entry name" value="NAD-SPECIFIC GLUTAMATE DEHYDROGENASE"/>
    <property type="match status" value="1"/>
</dbReference>
<dbReference type="Pfam" id="PF05088">
    <property type="entry name" value="Bac_GDH_CD"/>
    <property type="match status" value="1"/>
</dbReference>
<dbReference type="Pfam" id="PF21075">
    <property type="entry name" value="GDH_ACT1"/>
    <property type="match status" value="1"/>
</dbReference>
<dbReference type="Pfam" id="PF21076">
    <property type="entry name" value="GDH_ACT2"/>
    <property type="match status" value="1"/>
</dbReference>
<dbReference type="Pfam" id="PF21077">
    <property type="entry name" value="GDH_ACT3"/>
    <property type="match status" value="1"/>
</dbReference>
<dbReference type="Pfam" id="PF21074">
    <property type="entry name" value="GDH_C"/>
    <property type="match status" value="1"/>
</dbReference>
<dbReference type="Pfam" id="PF21073">
    <property type="entry name" value="GDH_HM1"/>
    <property type="match status" value="1"/>
</dbReference>
<dbReference type="Pfam" id="PF21079">
    <property type="entry name" value="GDH_HM2"/>
    <property type="match status" value="1"/>
</dbReference>
<dbReference type="Pfam" id="PF21078">
    <property type="entry name" value="GDH_HM3"/>
    <property type="match status" value="1"/>
</dbReference>
<dbReference type="PIRSF" id="PIRSF036761">
    <property type="entry name" value="GDH_Mll4104"/>
    <property type="match status" value="1"/>
</dbReference>
<dbReference type="SUPFAM" id="SSF53223">
    <property type="entry name" value="Aminoacid dehydrogenase-like, N-terminal domain"/>
    <property type="match status" value="1"/>
</dbReference>
<dbReference type="SUPFAM" id="SSF51735">
    <property type="entry name" value="NAD(P)-binding Rossmann-fold domains"/>
    <property type="match status" value="1"/>
</dbReference>
<keyword id="KW-0520">NAD</keyword>
<keyword id="KW-0560">Oxidoreductase</keyword>
<keyword id="KW-1185">Reference proteome</keyword>
<name>DHE2_MYCTU</name>
<accession>O53203</accession>
<accession>L0T9R1</accession>
<protein>
    <recommendedName>
        <fullName>NAD-specific glutamate dehydrogenase</fullName>
        <shortName>NAD-GDH</shortName>
        <ecNumber>1.4.1.2</ecNumber>
    </recommendedName>
    <alternativeName>
        <fullName>NAD(+)-dependent glutamate dehydrogenase</fullName>
    </alternativeName>
</protein>
<comment type="function">
    <text evidence="1">Catalyzes the reversible conversion of L-glutamate to 2-oxoglutarate.</text>
</comment>
<comment type="catalytic activity">
    <reaction>
        <text>L-glutamate + NAD(+) + H2O = 2-oxoglutarate + NH4(+) + NADH + H(+)</text>
        <dbReference type="Rhea" id="RHEA:15133"/>
        <dbReference type="ChEBI" id="CHEBI:15377"/>
        <dbReference type="ChEBI" id="CHEBI:15378"/>
        <dbReference type="ChEBI" id="CHEBI:16810"/>
        <dbReference type="ChEBI" id="CHEBI:28938"/>
        <dbReference type="ChEBI" id="CHEBI:29985"/>
        <dbReference type="ChEBI" id="CHEBI:57540"/>
        <dbReference type="ChEBI" id="CHEBI:57945"/>
        <dbReference type="EC" id="1.4.1.2"/>
    </reaction>
</comment>
<comment type="activity regulation">
    <text evidence="3">Activity is inhibited by unphosphorylated GarA.</text>
</comment>
<comment type="subunit">
    <text evidence="2 3">Interacts with (unphosphorylated) GarA.</text>
</comment>
<comment type="interaction">
    <interactant intactId="EBI-6405569">
        <id>O53203</id>
    </interactant>
    <interactant intactId="EBI-6405522">
        <id>P9WJA9</id>
        <label>garA</label>
    </interactant>
    <organismsDiffer>false</organismsDiffer>
    <experiments>5</experiments>
</comment>
<comment type="similarity">
    <text evidence="4">Belongs to the Glu/Leu/Phe/Val dehydrogenases family.</text>
</comment>
<proteinExistence type="evidence at protein level"/>
<organism>
    <name type="scientific">Mycobacterium tuberculosis (strain ATCC 25618 / H37Rv)</name>
    <dbReference type="NCBI Taxonomy" id="83332"/>
    <lineage>
        <taxon>Bacteria</taxon>
        <taxon>Bacillati</taxon>
        <taxon>Actinomycetota</taxon>
        <taxon>Actinomycetes</taxon>
        <taxon>Mycobacteriales</taxon>
        <taxon>Mycobacteriaceae</taxon>
        <taxon>Mycobacterium</taxon>
        <taxon>Mycobacterium tuberculosis complex</taxon>
    </lineage>
</organism>
<sequence>MTIDPGAKQDVEAWTTFTASADIPDWISKAYIDSYRGPRDDSSEATKAAEASWLPASLLTPAMLGAHYRLGRHRAAGESCVAVYRADDPAGFGPALQVVAEHGGMLMDSVTVLLHRLGIAYAAILTPVFDVHRSPTGELLRIEPKAEGTSPHLGEAWMHVALSPAVDHKGLAEVERLLPKVLADVQRVATDATALIATLSELAGEVESNAGGRFSAPDRQDVGELLRWLGDGNFLLLGYQRCRVADGMVYGEGSSGMGVLRGRTGSRPRLTDDDKLLVLAQARVGSYLRYGAYPYAIAVREYVDGSVVEHRFVGLFSVAAMNADVLEIPTISRRVREALAMAESDPSHPGQLLLDVIQTVPRPELFTLSAQRLLTMARAVVDLGSQRQALLFLRADRLQYFVSCLVYMPRDRYTTAVRMQFEDILVREFGGTRLEFTARVSESPWALMHFMVRLPEVGVAGEGAAAPPVDVSEANRIRIQGLLTEAARTWADRLIGAAAAAGSVGQADAMHYAAAFSEAYKQAVTPADAIGDIAVITELTDDSVKLVFSERDEQGVAQLTWFLGGRTASLSQLLPMLQSMGVVVLEERPFSVTRPDGLPVWIYQFKISPHPTIPLAPTVAERAATAHRFAEAVTAIWHGRVEIDRFNELVMRAGLTWQQVVLLRAYAKYLRQAGFPYSQSYIESVLNEHPATVRSLVDLFEALFVPVPSGSASNRDAQAAAAAVAADIDALVSLDTDRILRAFASLVQATLRTNYFVTRQGSARCRDVLALKLNAQLIDELPLPRPRYEIFVYSPRVEGVHLRFGPVARGGLRWSDRRDDFRTEILGLVKAQAVKNAVIVPVGAKGGFVVKRPPLPTGDPAADRDATRAEGVACYQLFISGLLDVTDNVDHATASVNPPPEVVRRDGDDAYLVVAADKGTATFSDIANDVAKSYGFWLGDAFASGGSVGYDHKAMGITARGAWEAVKRHFREIGIDTQTQDFTVVGIGDMSGDVFGNGMLLSKHIRLIAAFDHRHIFLDPNPDAAVSWAERRRMFELPRSSWSDYDRSLISEGGGVYSREQKAIPLSAQVRAVLGIDGSVDGGAAEMAPPNLIRAILRAPVDLLFNGGIGTYIKAESESDADVGDRANDPVRVNANQVRAKVIGEGGNLGVTALGRVEFDLSGGRINTDALDNSAGVDCSDHEVNIKILIDSLVSAGTVKADERTQLLESMTDEVAQLVLADNEDQNDLMGTSRANAASLLPVHAMQIKYLVAERGVNRELEALPSEKEIARRSEAGIGLTSPELATLMAHVKLGLKEEVLATELPDQDVFASRLPRYFPTALRERFTPEIRSHQLRREIVTTMLINDLVDTAGITYAFRIAEDVGVTPIDAVRTYVATDAIFGVGHIWRRIRAANLPIALSDRLTLDTRRLIDRAGRWLLNYRPQPLAVGAEINRFAAMVKALTPRMSEWLRGDDKAIVEKTAAEFASQGVPEDLAYRVSTGLYRYSLLDIIDIADIADIDAAEVADTYFALMDRLGTDGLLTAVSQLPRHDRWHSLARLAIRDDIYGALRSLCFDVLAVGEPGESSEQKIAEWEHLSASRVARARRTLDDIRASGQKDLATLSVAARQIRRMTRTSGRGISG</sequence>
<evidence type="ECO:0000250" key="1"/>
<evidence type="ECO:0000269" key="2">
    <source>
    </source>
</evidence>
<evidence type="ECO:0000269" key="3">
    <source>
    </source>
</evidence>
<evidence type="ECO:0000305" key="4"/>
<feature type="chain" id="PRO_0000419536" description="NAD-specific glutamate dehydrogenase">
    <location>
        <begin position="1"/>
        <end position="1624"/>
    </location>
</feature>
<feature type="active site" evidence="1">
    <location>
        <position position="845"/>
    </location>
</feature>
<reference key="1">
    <citation type="journal article" date="1998" name="Nature">
        <title>Deciphering the biology of Mycobacterium tuberculosis from the complete genome sequence.</title>
        <authorList>
            <person name="Cole S.T."/>
            <person name="Brosch R."/>
            <person name="Parkhill J."/>
            <person name="Garnier T."/>
            <person name="Churcher C.M."/>
            <person name="Harris D.E."/>
            <person name="Gordon S.V."/>
            <person name="Eiglmeier K."/>
            <person name="Gas S."/>
            <person name="Barry C.E. III"/>
            <person name="Tekaia F."/>
            <person name="Badcock K."/>
            <person name="Basham D."/>
            <person name="Brown D."/>
            <person name="Chillingworth T."/>
            <person name="Connor R."/>
            <person name="Davies R.M."/>
            <person name="Devlin K."/>
            <person name="Feltwell T."/>
            <person name="Gentles S."/>
            <person name="Hamlin N."/>
            <person name="Holroyd S."/>
            <person name="Hornsby T."/>
            <person name="Jagels K."/>
            <person name="Krogh A."/>
            <person name="McLean J."/>
            <person name="Moule S."/>
            <person name="Murphy L.D."/>
            <person name="Oliver S."/>
            <person name="Osborne J."/>
            <person name="Quail M.A."/>
            <person name="Rajandream M.A."/>
            <person name="Rogers J."/>
            <person name="Rutter S."/>
            <person name="Seeger K."/>
            <person name="Skelton S."/>
            <person name="Squares S."/>
            <person name="Squares R."/>
            <person name="Sulston J.E."/>
            <person name="Taylor K."/>
            <person name="Whitehead S."/>
            <person name="Barrell B.G."/>
        </authorList>
    </citation>
    <scope>NUCLEOTIDE SEQUENCE [LARGE SCALE GENOMIC DNA]</scope>
    <source>
        <strain>ATCC 25618 / H37Rv</strain>
    </source>
</reference>
<reference key="2">
    <citation type="journal article" date="2008" name="Mol. Microbiol.">
        <title>Regulation of glutamate metabolism by protein kinases in mycobacteria.</title>
        <authorList>
            <person name="O'Hare H.M."/>
            <person name="Duran R."/>
            <person name="Cervenansky C."/>
            <person name="Bellinzoni M."/>
            <person name="Wehenkel A.M."/>
            <person name="Pritsch O."/>
            <person name="Obal G."/>
            <person name="Baumgartner J."/>
            <person name="Vialaret J."/>
            <person name="Johnsson K."/>
            <person name="Alzari P.M."/>
        </authorList>
    </citation>
    <scope>INTERACTION WITH GARA</scope>
    <source>
        <strain>ATCC 25618 / H37Rv</strain>
    </source>
</reference>
<reference key="3">
    <citation type="journal article" date="2009" name="Sci. Signal.">
        <title>An intramolecular switch regulates phosphoindependent FHA domain interactions in Mycobacterium tuberculosis.</title>
        <authorList>
            <person name="Nott T.J."/>
            <person name="Kelly G."/>
            <person name="Stach L."/>
            <person name="Li J."/>
            <person name="Westcott S."/>
            <person name="Patel D."/>
            <person name="Hunt D.M."/>
            <person name="Howell S."/>
            <person name="Buxton R.S."/>
            <person name="O'Hare H.M."/>
            <person name="Smerdon S.J."/>
        </authorList>
    </citation>
    <scope>ACTIVITY REGULATION</scope>
    <scope>INTERACTION WITH GARA</scope>
    <source>
        <strain>ATCC 25618 / H37Rv</strain>
    </source>
</reference>
<reference key="4">
    <citation type="journal article" date="2011" name="Mol. Cell. Proteomics">
        <title>Proteogenomic analysis of Mycobacterium tuberculosis by high resolution mass spectrometry.</title>
        <authorList>
            <person name="Kelkar D.S."/>
            <person name="Kumar D."/>
            <person name="Kumar P."/>
            <person name="Balakrishnan L."/>
            <person name="Muthusamy B."/>
            <person name="Yadav A.K."/>
            <person name="Shrivastava P."/>
            <person name="Marimuthu A."/>
            <person name="Anand S."/>
            <person name="Sundaram H."/>
            <person name="Kingsbury R."/>
            <person name="Harsha H.C."/>
            <person name="Nair B."/>
            <person name="Prasad T.S."/>
            <person name="Chauhan D.S."/>
            <person name="Katoch K."/>
            <person name="Katoch V.M."/>
            <person name="Kumar P."/>
            <person name="Chaerkady R."/>
            <person name="Ramachandran S."/>
            <person name="Dash D."/>
            <person name="Pandey A."/>
        </authorList>
    </citation>
    <scope>IDENTIFICATION BY MASS SPECTROMETRY [LARGE SCALE ANALYSIS]</scope>
    <source>
        <strain>ATCC 25618 / H37Rv</strain>
    </source>
</reference>
<gene>
    <name type="primary">gdh</name>
    <name type="ordered locus">Rv2476c</name>
</gene>